<proteinExistence type="inferred from homology"/>
<evidence type="ECO:0000255" key="1">
    <source>
        <dbReference type="HAMAP-Rule" id="MF_00607"/>
    </source>
</evidence>
<accession>Q1GZB8</accession>
<organism>
    <name type="scientific">Methylobacillus flagellatus (strain ATCC 51484 / DSM 6875 / VKM B-1610 / KT)</name>
    <dbReference type="NCBI Taxonomy" id="265072"/>
    <lineage>
        <taxon>Bacteria</taxon>
        <taxon>Pseudomonadati</taxon>
        <taxon>Pseudomonadota</taxon>
        <taxon>Betaproteobacteria</taxon>
        <taxon>Nitrosomonadales</taxon>
        <taxon>Methylophilaceae</taxon>
        <taxon>Methylobacillus</taxon>
    </lineage>
</organism>
<comment type="function">
    <text evidence="1">Specifically dimethylates two adjacent adenosines (A1518 and A1519) in the loop of a conserved hairpin near the 3'-end of 16S rRNA in the 30S particle. May play a critical role in biogenesis of 30S subunits.</text>
</comment>
<comment type="catalytic activity">
    <reaction evidence="1">
        <text>adenosine(1518)/adenosine(1519) in 16S rRNA + 4 S-adenosyl-L-methionine = N(6)-dimethyladenosine(1518)/N(6)-dimethyladenosine(1519) in 16S rRNA + 4 S-adenosyl-L-homocysteine + 4 H(+)</text>
        <dbReference type="Rhea" id="RHEA:19609"/>
        <dbReference type="Rhea" id="RHEA-COMP:10232"/>
        <dbReference type="Rhea" id="RHEA-COMP:10233"/>
        <dbReference type="ChEBI" id="CHEBI:15378"/>
        <dbReference type="ChEBI" id="CHEBI:57856"/>
        <dbReference type="ChEBI" id="CHEBI:59789"/>
        <dbReference type="ChEBI" id="CHEBI:74411"/>
        <dbReference type="ChEBI" id="CHEBI:74493"/>
        <dbReference type="EC" id="2.1.1.182"/>
    </reaction>
</comment>
<comment type="subcellular location">
    <subcellularLocation>
        <location evidence="1">Cytoplasm</location>
    </subcellularLocation>
</comment>
<comment type="similarity">
    <text evidence="1">Belongs to the class I-like SAM-binding methyltransferase superfamily. rRNA adenine N(6)-methyltransferase family. RsmA subfamily.</text>
</comment>
<gene>
    <name evidence="1" type="primary">rsmA</name>
    <name evidence="1" type="synonym">ksgA</name>
    <name type="ordered locus">Mfla_2152</name>
</gene>
<sequence>MKHVAKKRFGQNFLTDRAIINSLIDAIAPQPQDCMVEIGPGLGAMTQPLLERLQHLHVVEIDRDIIQWMQGHYPQDKLTIYASDALKFNFGNISDRLRVVGNLPYNISTPILFHLLDNVPHIIDMHFMLQKEVVERMVAAPSSAAYGRLSVMLQYRLHMEYLLTVPPEAFDPAPKVESAFVRAVPYTVLPHPAKDEALLGRIVTAAFAQRRKTLRNTLKGLLDDTGFASLGIDPQLRAENIAPAGFVAIANYLAA</sequence>
<dbReference type="EC" id="2.1.1.182" evidence="1"/>
<dbReference type="EMBL" id="CP000284">
    <property type="protein sequence ID" value="ABE50419.1"/>
    <property type="molecule type" value="Genomic_DNA"/>
</dbReference>
<dbReference type="RefSeq" id="WP_011480373.1">
    <property type="nucleotide sequence ID" value="NC_007947.1"/>
</dbReference>
<dbReference type="SMR" id="Q1GZB8"/>
<dbReference type="STRING" id="265072.Mfla_2152"/>
<dbReference type="KEGG" id="mfa:Mfla_2152"/>
<dbReference type="eggNOG" id="COG0030">
    <property type="taxonomic scope" value="Bacteria"/>
</dbReference>
<dbReference type="HOGENOM" id="CLU_041220_0_1_4"/>
<dbReference type="OrthoDB" id="9814755at2"/>
<dbReference type="Proteomes" id="UP000002440">
    <property type="component" value="Chromosome"/>
</dbReference>
<dbReference type="GO" id="GO:0005829">
    <property type="term" value="C:cytosol"/>
    <property type="evidence" value="ECO:0007669"/>
    <property type="project" value="TreeGrafter"/>
</dbReference>
<dbReference type="GO" id="GO:0052908">
    <property type="term" value="F:16S rRNA (adenine(1518)-N(6)/adenine(1519)-N(6))-dimethyltransferase activity"/>
    <property type="evidence" value="ECO:0007669"/>
    <property type="project" value="UniProtKB-EC"/>
</dbReference>
<dbReference type="GO" id="GO:0003723">
    <property type="term" value="F:RNA binding"/>
    <property type="evidence" value="ECO:0007669"/>
    <property type="project" value="UniProtKB-KW"/>
</dbReference>
<dbReference type="FunFam" id="1.10.8.100:FF:000001">
    <property type="entry name" value="Ribosomal RNA small subunit methyltransferase A"/>
    <property type="match status" value="1"/>
</dbReference>
<dbReference type="Gene3D" id="1.10.8.100">
    <property type="entry name" value="Ribosomal RNA adenine dimethylase-like, domain 2"/>
    <property type="match status" value="1"/>
</dbReference>
<dbReference type="Gene3D" id="3.40.50.150">
    <property type="entry name" value="Vaccinia Virus protein VP39"/>
    <property type="match status" value="1"/>
</dbReference>
<dbReference type="HAMAP" id="MF_00607">
    <property type="entry name" value="16SrRNA_methyltr_A"/>
    <property type="match status" value="1"/>
</dbReference>
<dbReference type="InterPro" id="IPR001737">
    <property type="entry name" value="KsgA/Erm"/>
</dbReference>
<dbReference type="InterPro" id="IPR023165">
    <property type="entry name" value="rRNA_Ade_diMease-like_C"/>
</dbReference>
<dbReference type="InterPro" id="IPR020596">
    <property type="entry name" value="rRNA_Ade_Mease_Trfase_CS"/>
</dbReference>
<dbReference type="InterPro" id="IPR020598">
    <property type="entry name" value="rRNA_Ade_methylase_Trfase_N"/>
</dbReference>
<dbReference type="InterPro" id="IPR011530">
    <property type="entry name" value="rRNA_adenine_dimethylase"/>
</dbReference>
<dbReference type="InterPro" id="IPR029063">
    <property type="entry name" value="SAM-dependent_MTases_sf"/>
</dbReference>
<dbReference type="NCBIfam" id="TIGR00755">
    <property type="entry name" value="ksgA"/>
    <property type="match status" value="1"/>
</dbReference>
<dbReference type="PANTHER" id="PTHR11727">
    <property type="entry name" value="DIMETHYLADENOSINE TRANSFERASE"/>
    <property type="match status" value="1"/>
</dbReference>
<dbReference type="PANTHER" id="PTHR11727:SF7">
    <property type="entry name" value="DIMETHYLADENOSINE TRANSFERASE-RELATED"/>
    <property type="match status" value="1"/>
</dbReference>
<dbReference type="Pfam" id="PF00398">
    <property type="entry name" value="RrnaAD"/>
    <property type="match status" value="1"/>
</dbReference>
<dbReference type="SMART" id="SM00650">
    <property type="entry name" value="rADc"/>
    <property type="match status" value="1"/>
</dbReference>
<dbReference type="SUPFAM" id="SSF53335">
    <property type="entry name" value="S-adenosyl-L-methionine-dependent methyltransferases"/>
    <property type="match status" value="1"/>
</dbReference>
<dbReference type="PROSITE" id="PS01131">
    <property type="entry name" value="RRNA_A_DIMETH"/>
    <property type="match status" value="1"/>
</dbReference>
<dbReference type="PROSITE" id="PS51689">
    <property type="entry name" value="SAM_RNA_A_N6_MT"/>
    <property type="match status" value="1"/>
</dbReference>
<keyword id="KW-0963">Cytoplasm</keyword>
<keyword id="KW-0489">Methyltransferase</keyword>
<keyword id="KW-1185">Reference proteome</keyword>
<keyword id="KW-0694">RNA-binding</keyword>
<keyword id="KW-0698">rRNA processing</keyword>
<keyword id="KW-0949">S-adenosyl-L-methionine</keyword>
<keyword id="KW-0808">Transferase</keyword>
<protein>
    <recommendedName>
        <fullName evidence="1">Ribosomal RNA small subunit methyltransferase A</fullName>
        <ecNumber evidence="1">2.1.1.182</ecNumber>
    </recommendedName>
    <alternativeName>
        <fullName evidence="1">16S rRNA (adenine(1518)-N(6)/adenine(1519)-N(6))-dimethyltransferase</fullName>
    </alternativeName>
    <alternativeName>
        <fullName evidence="1">16S rRNA dimethyladenosine transferase</fullName>
    </alternativeName>
    <alternativeName>
        <fullName evidence="1">16S rRNA dimethylase</fullName>
    </alternativeName>
    <alternativeName>
        <fullName evidence="1">S-adenosylmethionine-6-N', N'-adenosyl(rRNA) dimethyltransferase</fullName>
    </alternativeName>
</protein>
<reference key="1">
    <citation type="submission" date="2006-03" db="EMBL/GenBank/DDBJ databases">
        <title>Complete sequence of Methylobacillus flagellatus KT.</title>
        <authorList>
            <consortium name="US DOE Joint Genome Institute"/>
            <person name="Copeland A."/>
            <person name="Lucas S."/>
            <person name="Lapidus A."/>
            <person name="Barry K."/>
            <person name="Detter J.C."/>
            <person name="Glavina del Rio T."/>
            <person name="Hammon N."/>
            <person name="Israni S."/>
            <person name="Dalin E."/>
            <person name="Tice H."/>
            <person name="Pitluck S."/>
            <person name="Brettin T."/>
            <person name="Bruce D."/>
            <person name="Han C."/>
            <person name="Tapia R."/>
            <person name="Saunders E."/>
            <person name="Gilna P."/>
            <person name="Schmutz J."/>
            <person name="Larimer F."/>
            <person name="Land M."/>
            <person name="Kyrpides N."/>
            <person name="Anderson I."/>
            <person name="Richardson P."/>
        </authorList>
    </citation>
    <scope>NUCLEOTIDE SEQUENCE [LARGE SCALE GENOMIC DNA]</scope>
    <source>
        <strain>ATCC 51484 / DSM 6875 / VKM B-1610 / KT</strain>
    </source>
</reference>
<name>RSMA_METFK</name>
<feature type="chain" id="PRO_0000257303" description="Ribosomal RNA small subunit methyltransferase A">
    <location>
        <begin position="1"/>
        <end position="255"/>
    </location>
</feature>
<feature type="binding site" evidence="1">
    <location>
        <position position="12"/>
    </location>
    <ligand>
        <name>S-adenosyl-L-methionine</name>
        <dbReference type="ChEBI" id="CHEBI:59789"/>
    </ligand>
</feature>
<feature type="binding site" evidence="1">
    <location>
        <position position="14"/>
    </location>
    <ligand>
        <name>S-adenosyl-L-methionine</name>
        <dbReference type="ChEBI" id="CHEBI:59789"/>
    </ligand>
</feature>
<feature type="binding site" evidence="1">
    <location>
        <position position="39"/>
    </location>
    <ligand>
        <name>S-adenosyl-L-methionine</name>
        <dbReference type="ChEBI" id="CHEBI:59789"/>
    </ligand>
</feature>
<feature type="binding site" evidence="1">
    <location>
        <position position="60"/>
    </location>
    <ligand>
        <name>S-adenosyl-L-methionine</name>
        <dbReference type="ChEBI" id="CHEBI:59789"/>
    </ligand>
</feature>
<feature type="binding site" evidence="1">
    <location>
        <position position="84"/>
    </location>
    <ligand>
        <name>S-adenosyl-L-methionine</name>
        <dbReference type="ChEBI" id="CHEBI:59789"/>
    </ligand>
</feature>
<feature type="binding site" evidence="1">
    <location>
        <position position="102"/>
    </location>
    <ligand>
        <name>S-adenosyl-L-methionine</name>
        <dbReference type="ChEBI" id="CHEBI:59789"/>
    </ligand>
</feature>